<proteinExistence type="inferred from homology"/>
<evidence type="ECO:0000255" key="1">
    <source>
        <dbReference type="HAMAP-Rule" id="MF_01212"/>
    </source>
</evidence>
<evidence type="ECO:0000255" key="2">
    <source>
        <dbReference type="PROSITE-ProRule" id="PRU01175"/>
    </source>
</evidence>
<comment type="similarity">
    <text evidence="1">Belongs to the dGTPase family. Type 2 subfamily.</text>
</comment>
<dbReference type="EMBL" id="CP001322">
    <property type="protein sequence ID" value="ACL01996.1"/>
    <property type="molecule type" value="Genomic_DNA"/>
</dbReference>
<dbReference type="RefSeq" id="WP_012609436.1">
    <property type="nucleotide sequence ID" value="NC_011768.1"/>
</dbReference>
<dbReference type="SMR" id="B8F8W4"/>
<dbReference type="KEGG" id="dal:Dalk_0287"/>
<dbReference type="eggNOG" id="COG0232">
    <property type="taxonomic scope" value="Bacteria"/>
</dbReference>
<dbReference type="HOGENOM" id="CLU_028163_1_1_7"/>
<dbReference type="Proteomes" id="UP000000739">
    <property type="component" value="Chromosome"/>
</dbReference>
<dbReference type="GO" id="GO:0016793">
    <property type="term" value="F:triphosphoric monoester hydrolase activity"/>
    <property type="evidence" value="ECO:0007669"/>
    <property type="project" value="InterPro"/>
</dbReference>
<dbReference type="CDD" id="cd00077">
    <property type="entry name" value="HDc"/>
    <property type="match status" value="1"/>
</dbReference>
<dbReference type="Gene3D" id="1.10.3210.10">
    <property type="entry name" value="Hypothetical protein af1432"/>
    <property type="match status" value="1"/>
</dbReference>
<dbReference type="HAMAP" id="MF_01212">
    <property type="entry name" value="dGTPase_type2"/>
    <property type="match status" value="1"/>
</dbReference>
<dbReference type="InterPro" id="IPR006261">
    <property type="entry name" value="dGTPase"/>
</dbReference>
<dbReference type="InterPro" id="IPR051094">
    <property type="entry name" value="Diverse_Catalytic_Enzymes"/>
</dbReference>
<dbReference type="InterPro" id="IPR023023">
    <property type="entry name" value="dNTPase_2"/>
</dbReference>
<dbReference type="InterPro" id="IPR003607">
    <property type="entry name" value="HD/PDEase_dom"/>
</dbReference>
<dbReference type="InterPro" id="IPR006674">
    <property type="entry name" value="HD_domain"/>
</dbReference>
<dbReference type="InterPro" id="IPR026875">
    <property type="entry name" value="PHydrolase_assoc_dom"/>
</dbReference>
<dbReference type="NCBIfam" id="TIGR01353">
    <property type="entry name" value="dGTP_triPase"/>
    <property type="match status" value="1"/>
</dbReference>
<dbReference type="NCBIfam" id="NF002327">
    <property type="entry name" value="PRK01286.1-2"/>
    <property type="match status" value="1"/>
</dbReference>
<dbReference type="PANTHER" id="PTHR35795:SF1">
    <property type="entry name" value="BIS(5'-NUCLEOSYL)-TETRAPHOSPHATASE, SYMMETRICAL"/>
    <property type="match status" value="1"/>
</dbReference>
<dbReference type="PANTHER" id="PTHR35795">
    <property type="entry name" value="SLR1885 PROTEIN"/>
    <property type="match status" value="1"/>
</dbReference>
<dbReference type="Pfam" id="PF01966">
    <property type="entry name" value="HD"/>
    <property type="match status" value="1"/>
</dbReference>
<dbReference type="Pfam" id="PF13286">
    <property type="entry name" value="HD_assoc"/>
    <property type="match status" value="1"/>
</dbReference>
<dbReference type="SMART" id="SM00471">
    <property type="entry name" value="HDc"/>
    <property type="match status" value="1"/>
</dbReference>
<dbReference type="SUPFAM" id="SSF109604">
    <property type="entry name" value="HD-domain/PDEase-like"/>
    <property type="match status" value="1"/>
</dbReference>
<dbReference type="PROSITE" id="PS51831">
    <property type="entry name" value="HD"/>
    <property type="match status" value="1"/>
</dbReference>
<protein>
    <recommendedName>
        <fullName evidence="1">Deoxyguanosinetriphosphate triphosphohydrolase-like protein</fullName>
    </recommendedName>
</protein>
<feature type="chain" id="PRO_1000138918" description="Deoxyguanosinetriphosphate triphosphohydrolase-like protein">
    <location>
        <begin position="1"/>
        <end position="351"/>
    </location>
</feature>
<feature type="domain" description="HD" evidence="2">
    <location>
        <begin position="75"/>
        <end position="196"/>
    </location>
</feature>
<gene>
    <name type="ordered locus">Dalk_0287</name>
</gene>
<sequence length="351" mass="39992">MTIREKFEQRELDFLSPFACPSAKSKGRKRPEAPCPIRTAFQRDRDRIVYSNAFRRLKHKTQVFLSPLGDHYRTRLTHTLEVAEIARTIARAMRLNEDLTEAVALGHDLGHTPFGHGGETVLKELFHKDFTHSRQSLRVVDCLERRGEGLNLTYEVMDGIAKHSKGFGTIMPNDAGEVASTMEGRVVRVADIIAYLSHDLDDAIRSGVVTRDQVPSHCVEVLGERHRDLVTTMIRDVVYSSGEEDGQMTIKMSDAMHDVMLELRTFLYNNVYRAPVVHNEFVKAKKILSELFDYYMNNVDAFQKAAIEQELFASPEHAAPTKQNVCDLIASMTDRFALTRYQKIFFPTPMV</sequence>
<organism>
    <name type="scientific">Desulfatibacillum aliphaticivorans</name>
    <dbReference type="NCBI Taxonomy" id="218208"/>
    <lineage>
        <taxon>Bacteria</taxon>
        <taxon>Pseudomonadati</taxon>
        <taxon>Thermodesulfobacteriota</taxon>
        <taxon>Desulfobacteria</taxon>
        <taxon>Desulfobacterales</taxon>
        <taxon>Desulfatibacillaceae</taxon>
        <taxon>Desulfatibacillum</taxon>
    </lineage>
</organism>
<accession>B8F8W4</accession>
<keyword id="KW-0378">Hydrolase</keyword>
<keyword id="KW-1185">Reference proteome</keyword>
<reference key="1">
    <citation type="journal article" date="2012" name="Environ. Microbiol.">
        <title>The genome sequence of Desulfatibacillum alkenivorans AK-01: a blueprint for anaerobic alkane oxidation.</title>
        <authorList>
            <person name="Callaghan A.V."/>
            <person name="Morris B.E."/>
            <person name="Pereira I.A."/>
            <person name="McInerney M.J."/>
            <person name="Austin R.N."/>
            <person name="Groves J.T."/>
            <person name="Kukor J.J."/>
            <person name="Suflita J.M."/>
            <person name="Young L.Y."/>
            <person name="Zylstra G.J."/>
            <person name="Wawrik B."/>
        </authorList>
    </citation>
    <scope>NUCLEOTIDE SEQUENCE [LARGE SCALE GENOMIC DNA]</scope>
    <source>
        <strain>AK-01</strain>
    </source>
</reference>
<name>DGTL1_DESAL</name>